<gene>
    <name evidence="1" type="primary">ilvC</name>
    <name type="ordered locus">HY04AAS1_0065</name>
</gene>
<dbReference type="EC" id="1.1.1.383" evidence="4"/>
<dbReference type="EMBL" id="CP001130">
    <property type="protein sequence ID" value="ACG56757.1"/>
    <property type="molecule type" value="Genomic_DNA"/>
</dbReference>
<dbReference type="RefSeq" id="WP_012513114.1">
    <property type="nucleotide sequence ID" value="NC_011126.1"/>
</dbReference>
<dbReference type="SMR" id="B4U6I9"/>
<dbReference type="STRING" id="380749.HY04AAS1_0065"/>
<dbReference type="KEGG" id="hya:HY04AAS1_0065"/>
<dbReference type="eggNOG" id="COG0059">
    <property type="taxonomic scope" value="Bacteria"/>
</dbReference>
<dbReference type="HOGENOM" id="CLU_033821_0_1_0"/>
<dbReference type="OrthoDB" id="9804088at2"/>
<dbReference type="UniPathway" id="UPA00047">
    <property type="reaction ID" value="UER00056"/>
</dbReference>
<dbReference type="UniPathway" id="UPA00049">
    <property type="reaction ID" value="UER00060"/>
</dbReference>
<dbReference type="GO" id="GO:0005829">
    <property type="term" value="C:cytosol"/>
    <property type="evidence" value="ECO:0007669"/>
    <property type="project" value="TreeGrafter"/>
</dbReference>
<dbReference type="GO" id="GO:0004455">
    <property type="term" value="F:ketol-acid reductoisomerase activity"/>
    <property type="evidence" value="ECO:0007669"/>
    <property type="project" value="UniProtKB-UniRule"/>
</dbReference>
<dbReference type="GO" id="GO:0000287">
    <property type="term" value="F:magnesium ion binding"/>
    <property type="evidence" value="ECO:0007669"/>
    <property type="project" value="UniProtKB-UniRule"/>
</dbReference>
<dbReference type="GO" id="GO:0050661">
    <property type="term" value="F:NADP binding"/>
    <property type="evidence" value="ECO:0007669"/>
    <property type="project" value="InterPro"/>
</dbReference>
<dbReference type="GO" id="GO:0009097">
    <property type="term" value="P:isoleucine biosynthetic process"/>
    <property type="evidence" value="ECO:0007669"/>
    <property type="project" value="UniProtKB-UniRule"/>
</dbReference>
<dbReference type="GO" id="GO:0009099">
    <property type="term" value="P:L-valine biosynthetic process"/>
    <property type="evidence" value="ECO:0007669"/>
    <property type="project" value="UniProtKB-UniRule"/>
</dbReference>
<dbReference type="FunFam" id="3.40.50.720:FF:000023">
    <property type="entry name" value="Ketol-acid reductoisomerase (NADP(+))"/>
    <property type="match status" value="1"/>
</dbReference>
<dbReference type="Gene3D" id="6.10.240.10">
    <property type="match status" value="1"/>
</dbReference>
<dbReference type="Gene3D" id="3.40.50.720">
    <property type="entry name" value="NAD(P)-binding Rossmann-like Domain"/>
    <property type="match status" value="1"/>
</dbReference>
<dbReference type="HAMAP" id="MF_00435">
    <property type="entry name" value="IlvC"/>
    <property type="match status" value="1"/>
</dbReference>
<dbReference type="InterPro" id="IPR008927">
    <property type="entry name" value="6-PGluconate_DH-like_C_sf"/>
</dbReference>
<dbReference type="InterPro" id="IPR013023">
    <property type="entry name" value="KARI"/>
</dbReference>
<dbReference type="InterPro" id="IPR000506">
    <property type="entry name" value="KARI_C"/>
</dbReference>
<dbReference type="InterPro" id="IPR013116">
    <property type="entry name" value="KARI_N"/>
</dbReference>
<dbReference type="InterPro" id="IPR014359">
    <property type="entry name" value="KARI_prok"/>
</dbReference>
<dbReference type="InterPro" id="IPR036291">
    <property type="entry name" value="NAD(P)-bd_dom_sf"/>
</dbReference>
<dbReference type="NCBIfam" id="TIGR00465">
    <property type="entry name" value="ilvC"/>
    <property type="match status" value="1"/>
</dbReference>
<dbReference type="NCBIfam" id="NF004017">
    <property type="entry name" value="PRK05479.1"/>
    <property type="match status" value="1"/>
</dbReference>
<dbReference type="NCBIfam" id="NF009940">
    <property type="entry name" value="PRK13403.1"/>
    <property type="match status" value="1"/>
</dbReference>
<dbReference type="PANTHER" id="PTHR21371">
    <property type="entry name" value="KETOL-ACID REDUCTOISOMERASE, MITOCHONDRIAL"/>
    <property type="match status" value="1"/>
</dbReference>
<dbReference type="PANTHER" id="PTHR21371:SF1">
    <property type="entry name" value="KETOL-ACID REDUCTOISOMERASE, MITOCHONDRIAL"/>
    <property type="match status" value="1"/>
</dbReference>
<dbReference type="Pfam" id="PF01450">
    <property type="entry name" value="KARI_C"/>
    <property type="match status" value="1"/>
</dbReference>
<dbReference type="Pfam" id="PF07991">
    <property type="entry name" value="KARI_N"/>
    <property type="match status" value="1"/>
</dbReference>
<dbReference type="PIRSF" id="PIRSF000116">
    <property type="entry name" value="IlvC_gammaproteo"/>
    <property type="match status" value="1"/>
</dbReference>
<dbReference type="SUPFAM" id="SSF48179">
    <property type="entry name" value="6-phosphogluconate dehydrogenase C-terminal domain-like"/>
    <property type="match status" value="1"/>
</dbReference>
<dbReference type="SUPFAM" id="SSF51735">
    <property type="entry name" value="NAD(P)-binding Rossmann-fold domains"/>
    <property type="match status" value="1"/>
</dbReference>
<dbReference type="PROSITE" id="PS51851">
    <property type="entry name" value="KARI_C"/>
    <property type="match status" value="1"/>
</dbReference>
<dbReference type="PROSITE" id="PS51850">
    <property type="entry name" value="KARI_N"/>
    <property type="match status" value="1"/>
</dbReference>
<evidence type="ECO:0000255" key="1">
    <source>
        <dbReference type="HAMAP-Rule" id="MF_00435"/>
    </source>
</evidence>
<evidence type="ECO:0000255" key="2">
    <source>
        <dbReference type="PROSITE-ProRule" id="PRU01197"/>
    </source>
</evidence>
<evidence type="ECO:0000255" key="3">
    <source>
        <dbReference type="PROSITE-ProRule" id="PRU01198"/>
    </source>
</evidence>
<evidence type="ECO:0000269" key="4">
    <source>
    </source>
</evidence>
<evidence type="ECO:0000303" key="5">
    <source>
    </source>
</evidence>
<evidence type="ECO:0000305" key="6"/>
<feature type="chain" id="PRO_1000124299" description="Ketol-acid reductoisomerase (NAD(P)(+))">
    <location>
        <begin position="1"/>
        <end position="333"/>
    </location>
</feature>
<feature type="domain" description="KARI N-terminal Rossmann" evidence="2">
    <location>
        <begin position="2"/>
        <end position="182"/>
    </location>
</feature>
<feature type="domain" description="KARI C-terminal knotted" evidence="3">
    <location>
        <begin position="183"/>
        <end position="327"/>
    </location>
</feature>
<feature type="active site" evidence="1">
    <location>
        <position position="108"/>
    </location>
</feature>
<feature type="binding site" evidence="1 6">
    <location>
        <begin position="25"/>
        <end position="28"/>
    </location>
    <ligand>
        <name>NADP(+)</name>
        <dbReference type="ChEBI" id="CHEBI:58349"/>
    </ligand>
</feature>
<feature type="binding site" evidence="1 6">
    <location>
        <position position="51"/>
    </location>
    <ligand>
        <name>NADP(+)</name>
        <dbReference type="ChEBI" id="CHEBI:58349"/>
    </ligand>
</feature>
<feature type="binding site" evidence="1 6">
    <location>
        <begin position="83"/>
        <end position="86"/>
    </location>
    <ligand>
        <name>NADP(+)</name>
        <dbReference type="ChEBI" id="CHEBI:58349"/>
    </ligand>
</feature>
<feature type="binding site" evidence="1 6">
    <location>
        <position position="134"/>
    </location>
    <ligand>
        <name>NADP(+)</name>
        <dbReference type="ChEBI" id="CHEBI:58349"/>
    </ligand>
</feature>
<feature type="binding site" evidence="1">
    <location>
        <position position="191"/>
    </location>
    <ligand>
        <name>Mg(2+)</name>
        <dbReference type="ChEBI" id="CHEBI:18420"/>
        <label>1</label>
    </ligand>
</feature>
<feature type="binding site" evidence="1">
    <location>
        <position position="191"/>
    </location>
    <ligand>
        <name>Mg(2+)</name>
        <dbReference type="ChEBI" id="CHEBI:18420"/>
        <label>2</label>
    </ligand>
</feature>
<feature type="binding site" evidence="1">
    <location>
        <position position="195"/>
    </location>
    <ligand>
        <name>Mg(2+)</name>
        <dbReference type="ChEBI" id="CHEBI:18420"/>
        <label>1</label>
    </ligand>
</feature>
<feature type="binding site" evidence="1">
    <location>
        <position position="227"/>
    </location>
    <ligand>
        <name>Mg(2+)</name>
        <dbReference type="ChEBI" id="CHEBI:18420"/>
        <label>2</label>
    </ligand>
</feature>
<feature type="binding site" evidence="1">
    <location>
        <position position="231"/>
    </location>
    <ligand>
        <name>Mg(2+)</name>
        <dbReference type="ChEBI" id="CHEBI:18420"/>
        <label>2</label>
    </ligand>
</feature>
<feature type="binding site" evidence="1">
    <location>
        <position position="252"/>
    </location>
    <ligand>
        <name>substrate</name>
    </ligand>
</feature>
<name>ILVC_HYDS0</name>
<protein>
    <recommendedName>
        <fullName evidence="5">Ketol-acid reductoisomerase (NAD(P)(+))</fullName>
        <shortName evidence="1 5">KARI</shortName>
        <ecNumber evidence="4">1.1.1.383</ecNumber>
    </recommendedName>
    <alternativeName>
        <fullName evidence="1">Acetohydroxy-acid isomeroreductase</fullName>
        <shortName evidence="1">AHIR</shortName>
    </alternativeName>
    <alternativeName>
        <fullName evidence="1">Alpha-keto-beta-hydroxylacyl reductoisomerase</fullName>
    </alternativeName>
    <alternativeName>
        <fullName evidence="1 5">Ketol-acid reductoisomerase type 1</fullName>
    </alternativeName>
    <alternativeName>
        <fullName evidence="1 5">Ketol-acid reductoisomerase type I</fullName>
    </alternativeName>
</protein>
<comment type="function">
    <text evidence="4">Involved in the biosynthesis of branched-chain amino acids (BCAA). Catalyzes an alkyl-migration followed by a ketol-acid reduction of (S)-2-acetolactate (S2AL) to yield (R)-2,3-dihydroxy-isovalerate. In the isomerase reaction, S2AL is rearranged via a Mg-dependent methyl migration to produce 3-hydroxy-3-methyl-2-ketobutyrate (HMKB). In the reductase reaction, this 2-ketoacid undergoes a metal-dependent reduction by NADPH or NADH to yield (R)-2,3-dihydroxy-isovalerate.</text>
</comment>
<comment type="catalytic activity">
    <reaction evidence="4">
        <text>(2R)-2,3-dihydroxy-3-methylbutanoate + NAD(+) = (2S)-2-acetolactate + NADH + H(+)</text>
        <dbReference type="Rhea" id="RHEA:30627"/>
        <dbReference type="ChEBI" id="CHEBI:15378"/>
        <dbReference type="ChEBI" id="CHEBI:49072"/>
        <dbReference type="ChEBI" id="CHEBI:57540"/>
        <dbReference type="ChEBI" id="CHEBI:57945"/>
        <dbReference type="ChEBI" id="CHEBI:58476"/>
        <dbReference type="EC" id="1.1.1.383"/>
    </reaction>
</comment>
<comment type="catalytic activity">
    <reaction evidence="4">
        <text>(2R)-2,3-dihydroxy-3-methylbutanoate + NADP(+) = (2S)-2-acetolactate + NADPH + H(+)</text>
        <dbReference type="Rhea" id="RHEA:22068"/>
        <dbReference type="ChEBI" id="CHEBI:15378"/>
        <dbReference type="ChEBI" id="CHEBI:49072"/>
        <dbReference type="ChEBI" id="CHEBI:57783"/>
        <dbReference type="ChEBI" id="CHEBI:58349"/>
        <dbReference type="ChEBI" id="CHEBI:58476"/>
        <dbReference type="EC" id="1.1.1.383"/>
    </reaction>
</comment>
<comment type="cofactor">
    <cofactor evidence="1">
        <name>Mg(2+)</name>
        <dbReference type="ChEBI" id="CHEBI:18420"/>
    </cofactor>
    <text evidence="1">Binds 2 magnesium ions per subunit.</text>
</comment>
<comment type="biophysicochemical properties">
    <kinetics>
        <KM evidence="4">39 uM for NADH (at pH 7 with S2AL as substrate)</KM>
        <KM evidence="4">46 uM for NADPH (at pH 7 with S2AL as substrate)</KM>
        <text evidence="4">kcat is 0.12 sec(-1) for isomerase activity with NADPH (at pH 7 with S2AL as substrate). kcat is 0.12 sec(-1) for isomerase activity with NADH (at pH 7 with S2AL as substrate).</text>
    </kinetics>
</comment>
<comment type="pathway">
    <text evidence="1">Amino-acid biosynthesis; L-isoleucine biosynthesis; L-isoleucine from 2-oxobutanoate: step 2/4.</text>
</comment>
<comment type="pathway">
    <text evidence="1">Amino-acid biosynthesis; L-valine biosynthesis; L-valine from pyruvate: step 2/4.</text>
</comment>
<comment type="similarity">
    <text evidence="1">Belongs to the ketol-acid reductoisomerase family.</text>
</comment>
<accession>B4U6I9</accession>
<organism>
    <name type="scientific">Hydrogenobaculum sp. (strain Y04AAS1)</name>
    <dbReference type="NCBI Taxonomy" id="380749"/>
    <lineage>
        <taxon>Bacteria</taxon>
        <taxon>Pseudomonadati</taxon>
        <taxon>Aquificota</taxon>
        <taxon>Aquificia</taxon>
        <taxon>Aquificales</taxon>
        <taxon>Aquificaceae</taxon>
        <taxon>Hydrogenobaculum</taxon>
    </lineage>
</organism>
<keyword id="KW-0028">Amino-acid biosynthesis</keyword>
<keyword id="KW-0100">Branched-chain amino acid biosynthesis</keyword>
<keyword id="KW-0460">Magnesium</keyword>
<keyword id="KW-0479">Metal-binding</keyword>
<keyword id="KW-0521">NADP</keyword>
<keyword id="KW-0560">Oxidoreductase</keyword>
<sequence>MAKIYYDEDASLGILAMKTVAIVGYGSQGHAHALNLRDSGIRVIVALDDKSPHRKTAMEDGFSVYTTSRATQEADVIMILTPDTVQPAVYKECIEPNLTPGKAIAFAHGFNIHFGQIVPPKDIDVFMVAPKGPGHLVRWMYEEGKGVPALISIHQDATGSCRDIALAYAKGIGATRAGVIETTFREETETDLFGEQAVLCGGATALIKAGFETLVEAGYQPEMAYFECLHELKLIVDLIYQHGIAGMRYSISDTAKYGDVTRGDRVYEAVKPLMKQMLKEIQDGEFAREWILENQANRPVYNALLNKDKEHLVEKVGKELRQMMPWLSGKELK</sequence>
<proteinExistence type="evidence at protein level"/>
<reference key="1">
    <citation type="journal article" date="2009" name="J. Bacteriol.">
        <title>Complete and draft genome sequences of six members of the Aquificales.</title>
        <authorList>
            <person name="Reysenbach A.-L."/>
            <person name="Hamamura N."/>
            <person name="Podar M."/>
            <person name="Griffiths E."/>
            <person name="Ferreira S."/>
            <person name="Hochstein R."/>
            <person name="Heidelberg J."/>
            <person name="Johnson J."/>
            <person name="Mead D."/>
            <person name="Pohorille A."/>
            <person name="Sarmiento M."/>
            <person name="Schweighofer K."/>
            <person name="Seshadri R."/>
            <person name="Voytek M.A."/>
        </authorList>
    </citation>
    <scope>NUCLEOTIDE SEQUENCE [LARGE SCALE GENOMIC DNA]</scope>
    <source>
        <strain>Y04AAS1</strain>
    </source>
</reference>
<reference key="2">
    <citation type="journal article" date="2014" name="Metab. Eng.">
        <title>Uncovering rare NADH-preferring ketol-acid reductoisomerases.</title>
        <authorList>
            <person name="Brinkmann-Chen S."/>
            <person name="Cahn J.K."/>
            <person name="Arnold F.H."/>
        </authorList>
    </citation>
    <scope>FUNCTION</scope>
    <scope>CATALYTIC ACTIVITY</scope>
    <scope>BIOPHYSICOCHEMICAL PROPERTIES</scope>
    <scope>SUBSTRATE SPECIFICITY</scope>
</reference>